<comment type="cofactor">
    <cofactor evidence="1">
        <name>Zn(2+)</name>
        <dbReference type="ChEBI" id="CHEBI:29105"/>
    </cofactor>
    <text evidence="1">Binds 1 zinc ion.</text>
</comment>
<comment type="subcellular location">
    <subcellularLocation>
        <location evidence="1">Cytoplasm</location>
    </subcellularLocation>
</comment>
<comment type="similarity">
    <text evidence="1">Belongs to the SprT family.</text>
</comment>
<protein>
    <recommendedName>
        <fullName evidence="1">Protein SprT-like</fullName>
    </recommendedName>
</protein>
<sequence length="152" mass="18515">MDEQEIQRLVEEVSLQYFEMPFLHKAVFNNRLRTTGGRYLLKSHNIELNYRYYEVYGEEELVGIIKHELCHYHLHIAGRGYKHRDRDFRELLKKVDAPRFCKRMINEEKEKKIYKYECMECSLQYVRRRQINTKRYVCGKCKGKLKPISKTS</sequence>
<keyword id="KW-0963">Cytoplasm</keyword>
<keyword id="KW-0479">Metal-binding</keyword>
<keyword id="KW-0862">Zinc</keyword>
<organism>
    <name type="scientific">Bacillus cereus (strain B4264)</name>
    <dbReference type="NCBI Taxonomy" id="405532"/>
    <lineage>
        <taxon>Bacteria</taxon>
        <taxon>Bacillati</taxon>
        <taxon>Bacillota</taxon>
        <taxon>Bacilli</taxon>
        <taxon>Bacillales</taxon>
        <taxon>Bacillaceae</taxon>
        <taxon>Bacillus</taxon>
        <taxon>Bacillus cereus group</taxon>
    </lineage>
</organism>
<gene>
    <name type="ordered locus">BCB4264_A0272</name>
</gene>
<evidence type="ECO:0000255" key="1">
    <source>
        <dbReference type="HAMAP-Rule" id="MF_00745"/>
    </source>
</evidence>
<accession>B7H4P7</accession>
<proteinExistence type="inferred from homology"/>
<name>SPRTL_BACC4</name>
<dbReference type="EMBL" id="CP001176">
    <property type="protein sequence ID" value="ACK63723.1"/>
    <property type="molecule type" value="Genomic_DNA"/>
</dbReference>
<dbReference type="RefSeq" id="WP_000344237.1">
    <property type="nucleotide sequence ID" value="NC_011725.1"/>
</dbReference>
<dbReference type="KEGG" id="bcb:BCB4264_A0272"/>
<dbReference type="HOGENOM" id="CLU_123820_0_0_9"/>
<dbReference type="Proteomes" id="UP000007096">
    <property type="component" value="Chromosome"/>
</dbReference>
<dbReference type="GO" id="GO:0005737">
    <property type="term" value="C:cytoplasm"/>
    <property type="evidence" value="ECO:0007669"/>
    <property type="project" value="UniProtKB-SubCell"/>
</dbReference>
<dbReference type="GO" id="GO:0008270">
    <property type="term" value="F:zinc ion binding"/>
    <property type="evidence" value="ECO:0007669"/>
    <property type="project" value="UniProtKB-UniRule"/>
</dbReference>
<dbReference type="GO" id="GO:0006950">
    <property type="term" value="P:response to stress"/>
    <property type="evidence" value="ECO:0007669"/>
    <property type="project" value="UniProtKB-ARBA"/>
</dbReference>
<dbReference type="HAMAP" id="MF_00745">
    <property type="entry name" value="SprT_like"/>
    <property type="match status" value="1"/>
</dbReference>
<dbReference type="InterPro" id="IPR006640">
    <property type="entry name" value="SprT-like_domain"/>
</dbReference>
<dbReference type="InterPro" id="IPR035240">
    <property type="entry name" value="SprT_Zn_ribbon"/>
</dbReference>
<dbReference type="InterPro" id="IPR023524">
    <property type="entry name" value="Uncharacterised_SprT-like"/>
</dbReference>
<dbReference type="NCBIfam" id="NF003339">
    <property type="entry name" value="PRK04351.1"/>
    <property type="match status" value="1"/>
</dbReference>
<dbReference type="Pfam" id="PF10263">
    <property type="entry name" value="SprT-like"/>
    <property type="match status" value="1"/>
</dbReference>
<dbReference type="Pfam" id="PF17283">
    <property type="entry name" value="Zn_ribbon_SprT"/>
    <property type="match status" value="1"/>
</dbReference>
<dbReference type="SMART" id="SM00731">
    <property type="entry name" value="SprT"/>
    <property type="match status" value="1"/>
</dbReference>
<feature type="chain" id="PRO_1000133230" description="Protein SprT-like">
    <location>
        <begin position="1"/>
        <end position="152"/>
    </location>
</feature>
<feature type="domain" description="SprT-like" evidence="1">
    <location>
        <begin position="7"/>
        <end position="147"/>
    </location>
</feature>
<feature type="active site" evidence="1">
    <location>
        <position position="68"/>
    </location>
</feature>
<feature type="binding site" evidence="1">
    <location>
        <position position="67"/>
    </location>
    <ligand>
        <name>Zn(2+)</name>
        <dbReference type="ChEBI" id="CHEBI:29105"/>
    </ligand>
</feature>
<feature type="binding site" evidence="1">
    <location>
        <position position="71"/>
    </location>
    <ligand>
        <name>Zn(2+)</name>
        <dbReference type="ChEBI" id="CHEBI:29105"/>
    </ligand>
</feature>
<reference key="1">
    <citation type="submission" date="2008-10" db="EMBL/GenBank/DDBJ databases">
        <title>Genome sequence of Bacillus cereus B4264.</title>
        <authorList>
            <person name="Dodson R.J."/>
            <person name="Durkin A.S."/>
            <person name="Rosovitz M.J."/>
            <person name="Rasko D.A."/>
            <person name="Hoffmaster A."/>
            <person name="Ravel J."/>
            <person name="Sutton G."/>
        </authorList>
    </citation>
    <scope>NUCLEOTIDE SEQUENCE [LARGE SCALE GENOMIC DNA]</scope>
    <source>
        <strain>B4264</strain>
    </source>
</reference>